<dbReference type="EMBL" id="M11396">
    <property type="protein sequence ID" value="AAA27777.1"/>
    <property type="molecule type" value="mRNA"/>
</dbReference>
<dbReference type="RefSeq" id="XP_012943902.1">
    <property type="nucleotide sequence ID" value="XM_013088448.1"/>
</dbReference>
<dbReference type="SMR" id="P09892"/>
<dbReference type="EnsemblMetazoa" id="XM_013088448.1">
    <property type="protein sequence ID" value="XP_012943902.1"/>
    <property type="gene ID" value="LOC101845040"/>
</dbReference>
<dbReference type="GeneID" id="101845040"/>
<dbReference type="OrthoDB" id="6040379at2759"/>
<dbReference type="Proteomes" id="UP000694888">
    <property type="component" value="Unplaced"/>
</dbReference>
<dbReference type="GO" id="GO:0005576">
    <property type="term" value="C:extracellular region"/>
    <property type="evidence" value="ECO:0007669"/>
    <property type="project" value="UniProtKB-SubCell"/>
</dbReference>
<dbReference type="GO" id="GO:0007218">
    <property type="term" value="P:neuropeptide signaling pathway"/>
    <property type="evidence" value="ECO:0007669"/>
    <property type="project" value="UniProtKB-KW"/>
</dbReference>
<sequence>METSVSRVTVSLTLLVLIICSADAMNYLAFPRMGRARPGYLAFPRMGRSQMKTETGTDCCGLGMKSEFVIGQEGKEELRHGACSSSVACCAGLREIVDQKQDGVFFSMCVPDFVASRSSEESSSEVLSKLKSLLQK</sequence>
<name>SCP_APLCA</name>
<proteinExistence type="evidence at protein level"/>
<reference key="1">
    <citation type="journal article" date="1985" name="Proc. Natl. Acad. Sci. U.S.A.">
        <title>The small cardioactive peptides A and B of Aplysia are derived from a common precursor molecule.</title>
        <authorList>
            <person name="Mahon A.C."/>
            <person name="Lloyd P.E."/>
            <person name="Weiss K.R."/>
            <person name="Kupfermann I."/>
            <person name="Scheller R.H."/>
        </authorList>
    </citation>
    <scope>NUCLEOTIDE SEQUENCE [MRNA]</scope>
    <scope>AMIDATION AT MET-33 AND MET-46</scope>
</reference>
<reference key="2">
    <citation type="journal article" date="1998" name="Peptides">
        <title>Mass spectrometric survey of interganglionically transported peptides in Aplysia.</title>
        <authorList>
            <person name="Li L."/>
            <person name="Moroz T.P."/>
            <person name="Garden R.W."/>
            <person name="Floyd P.D."/>
            <person name="Weiss K.R."/>
            <person name="Sweedler J.V."/>
        </authorList>
    </citation>
    <scope>MASS SPECTROMETRY</scope>
</reference>
<reference key="3">
    <citation type="journal article" date="2000" name="Anal. Chem.">
        <title>Peptide profiling of cells with multiple gene products: combining immunochemistry and MALDI mass spectrometry with on-plate microextraction.</title>
        <authorList>
            <person name="Li L."/>
            <person name="Romanova E.V."/>
            <person name="Rubakhin S.S."/>
            <person name="Alexeeva V."/>
            <person name="Weiss K.R."/>
            <person name="Vilim F.S."/>
            <person name="Sweedler J.V."/>
        </authorList>
    </citation>
    <scope>IDENTIFICATION BY MASS SPECTROMETRY</scope>
</reference>
<keyword id="KW-0027">Amidation</keyword>
<keyword id="KW-1015">Disulfide bond</keyword>
<keyword id="KW-0527">Neuropeptide</keyword>
<keyword id="KW-0964">Secreted</keyword>
<keyword id="KW-0732">Signal</keyword>
<protein>
    <recommendedName>
        <fullName>Small cardioactive peptides</fullName>
    </recommendedName>
    <component>
        <recommendedName>
            <fullName>Small cardioactive peptide B</fullName>
            <shortName>SCP B</shortName>
        </recommendedName>
    </component>
    <component>
        <recommendedName>
            <fullName>Small cardioactive peptide A</fullName>
            <shortName>SCP A</shortName>
        </recommendedName>
    </component>
</protein>
<accession>P09892</accession>
<organism>
    <name type="scientific">Aplysia californica</name>
    <name type="common">California sea hare</name>
    <dbReference type="NCBI Taxonomy" id="6500"/>
    <lineage>
        <taxon>Eukaryota</taxon>
        <taxon>Metazoa</taxon>
        <taxon>Spiralia</taxon>
        <taxon>Lophotrochozoa</taxon>
        <taxon>Mollusca</taxon>
        <taxon>Gastropoda</taxon>
        <taxon>Heterobranchia</taxon>
        <taxon>Euthyneura</taxon>
        <taxon>Tectipleura</taxon>
        <taxon>Aplysiida</taxon>
        <taxon>Aplysioidea</taxon>
        <taxon>Aplysiidae</taxon>
        <taxon>Aplysia</taxon>
    </lineage>
</organism>
<evidence type="ECO:0000255" key="1"/>
<evidence type="ECO:0000269" key="2">
    <source>
    </source>
</evidence>
<evidence type="ECO:0000269" key="3">
    <source>
    </source>
</evidence>
<evidence type="ECO:0000305" key="4"/>
<feature type="signal peptide" evidence="1">
    <location>
        <begin position="1"/>
        <end position="24"/>
    </location>
</feature>
<feature type="peptide" id="PRO_0000001877" description="Small cardioactive peptide B">
    <location>
        <begin position="25"/>
        <end position="33"/>
    </location>
</feature>
<feature type="peptide" id="PRO_0000311917" description="Small cardioactive peptide A">
    <location>
        <begin position="36"/>
        <end position="46"/>
    </location>
</feature>
<feature type="propeptide" id="PRO_0000311918" description="Carboxy-terminal peptide">
    <location>
        <begin position="49"/>
        <end position="135"/>
    </location>
</feature>
<feature type="modified residue" description="Methionine amide" evidence="2">
    <location>
        <position position="33"/>
    </location>
</feature>
<feature type="modified residue" description="Methionine amide" evidence="2">
    <location>
        <position position="46"/>
    </location>
</feature>
<comment type="function">
    <text>Involved in the stimulation of contractile activity in the gut, the increase of the amplitude of the heart beat, and enhancement of the contractile response of the radula closer muscle.</text>
</comment>
<comment type="subcellular location">
    <subcellularLocation>
        <location>Secreted</location>
    </subcellularLocation>
</comment>
<comment type="tissue specificity">
    <text>Highly expressed in the buccal ganglion.</text>
</comment>
<comment type="PTM">
    <text>Contains three disulfide bonds.</text>
</comment>
<comment type="mass spectrometry">
    <molecule>Small cardioactive peptide B</molecule>
</comment>
<comment type="mass spectrometry">
    <molecule>Small cardioactive peptide A</molecule>
</comment>
<comment type="similarity">
    <text evidence="4">Belongs to the SCP family.</text>
</comment>